<proteinExistence type="evidence at protein level"/>
<accession>Q8K124</accession>
<accession>Q3TCY2</accession>
<accession>Q3U4R2</accession>
<accession>Q8C1F2</accession>
<accession>Q8R140</accession>
<evidence type="ECO:0000250" key="1">
    <source>
        <dbReference type="UniProtKB" id="Q8TD55"/>
    </source>
</evidence>
<evidence type="ECO:0000255" key="2"/>
<evidence type="ECO:0000255" key="3">
    <source>
        <dbReference type="PROSITE-ProRule" id="PRU00145"/>
    </source>
</evidence>
<evidence type="ECO:0000256" key="4">
    <source>
        <dbReference type="SAM" id="MobiDB-lite"/>
    </source>
</evidence>
<evidence type="ECO:0000305" key="5"/>
<evidence type="ECO:0007744" key="6">
    <source>
    </source>
</evidence>
<evidence type="ECO:0007744" key="7">
    <source>
    </source>
</evidence>
<evidence type="ECO:0007744" key="8">
    <source>
    </source>
</evidence>
<dbReference type="EMBL" id="AK028069">
    <property type="protein sequence ID" value="BAC25735.1"/>
    <property type="molecule type" value="mRNA"/>
</dbReference>
<dbReference type="EMBL" id="AK154092">
    <property type="protein sequence ID" value="BAE32369.1"/>
    <property type="molecule type" value="mRNA"/>
</dbReference>
<dbReference type="EMBL" id="AK170479">
    <property type="protein sequence ID" value="BAE41823.1"/>
    <property type="molecule type" value="mRNA"/>
</dbReference>
<dbReference type="EMBL" id="BC025598">
    <property type="protein sequence ID" value="AAH25598.1"/>
    <property type="molecule type" value="mRNA"/>
</dbReference>
<dbReference type="EMBL" id="BC028908">
    <property type="protein sequence ID" value="AAH28908.1"/>
    <property type="molecule type" value="mRNA"/>
</dbReference>
<dbReference type="CCDS" id="CCDS23294.1"/>
<dbReference type="RefSeq" id="NP_694759.1">
    <property type="nucleotide sequence ID" value="NM_153119.3"/>
</dbReference>
<dbReference type="SMR" id="Q8K124"/>
<dbReference type="BioGRID" id="221902">
    <property type="interactions" value="2"/>
</dbReference>
<dbReference type="FunCoup" id="Q8K124">
    <property type="interactions" value="147"/>
</dbReference>
<dbReference type="IntAct" id="Q8K124">
    <property type="interactions" value="1"/>
</dbReference>
<dbReference type="MINT" id="Q8K124"/>
<dbReference type="STRING" id="10090.ENSMUSP00000063677"/>
<dbReference type="GlyGen" id="Q8K124">
    <property type="glycosylation" value="2 sites, 1 N-linked glycan (1 site), 1 O-linked glycan (1 site)"/>
</dbReference>
<dbReference type="iPTMnet" id="Q8K124"/>
<dbReference type="PhosphoSitePlus" id="Q8K124"/>
<dbReference type="SwissPalm" id="Q8K124"/>
<dbReference type="jPOST" id="Q8K124"/>
<dbReference type="PaxDb" id="10090-ENSMUSP00000063677"/>
<dbReference type="PeptideAtlas" id="Q8K124"/>
<dbReference type="ProteomicsDB" id="289606"/>
<dbReference type="Pumba" id="Q8K124"/>
<dbReference type="Antibodypedia" id="34926">
    <property type="antibodies" value="109 antibodies from 23 providers"/>
</dbReference>
<dbReference type="DNASU" id="102595"/>
<dbReference type="Ensembl" id="ENSMUST00000068944.9">
    <property type="protein sequence ID" value="ENSMUSP00000063677.8"/>
    <property type="gene ID" value="ENSMUSG00000050721.10"/>
</dbReference>
<dbReference type="GeneID" id="102595"/>
<dbReference type="KEGG" id="mmu:102595"/>
<dbReference type="UCSC" id="uc009qdl.2">
    <property type="organism name" value="mouse"/>
</dbReference>
<dbReference type="AGR" id="MGI:2143132"/>
<dbReference type="CTD" id="80301"/>
<dbReference type="MGI" id="MGI:2143132">
    <property type="gene designation" value="Plekho2"/>
</dbReference>
<dbReference type="VEuPathDB" id="HostDB:ENSMUSG00000050721"/>
<dbReference type="eggNOG" id="ENOG502QVFF">
    <property type="taxonomic scope" value="Eukaryota"/>
</dbReference>
<dbReference type="GeneTree" id="ENSGT00530000063760"/>
<dbReference type="HOGENOM" id="CLU_026551_3_0_1"/>
<dbReference type="InParanoid" id="Q8K124"/>
<dbReference type="OMA" id="LGHWKDR"/>
<dbReference type="OrthoDB" id="87909at9989"/>
<dbReference type="PhylomeDB" id="Q8K124"/>
<dbReference type="TreeFam" id="TF333115"/>
<dbReference type="Reactome" id="R-MMU-6798695">
    <property type="pathway name" value="Neutrophil degranulation"/>
</dbReference>
<dbReference type="BioGRID-ORCS" id="102595">
    <property type="hits" value="2 hits in 76 CRISPR screens"/>
</dbReference>
<dbReference type="ChiTaRS" id="Plekho2">
    <property type="organism name" value="mouse"/>
</dbReference>
<dbReference type="PRO" id="PR:Q8K124"/>
<dbReference type="Proteomes" id="UP000000589">
    <property type="component" value="Chromosome 9"/>
</dbReference>
<dbReference type="RNAct" id="Q8K124">
    <property type="molecule type" value="protein"/>
</dbReference>
<dbReference type="Bgee" id="ENSMUSG00000050721">
    <property type="expression patterns" value="Expressed in granulocyte and 152 other cell types or tissues"/>
</dbReference>
<dbReference type="GO" id="GO:0071888">
    <property type="term" value="P:macrophage apoptotic process"/>
    <property type="evidence" value="ECO:0000315"/>
    <property type="project" value="MGI"/>
</dbReference>
<dbReference type="CDD" id="cd13317">
    <property type="entry name" value="PH_PLEKHO1_PLEKHO2"/>
    <property type="match status" value="1"/>
</dbReference>
<dbReference type="Gene3D" id="2.30.29.30">
    <property type="entry name" value="Pleckstrin-homology domain (PH domain)/Phosphotyrosine-binding domain (PTB)"/>
    <property type="match status" value="1"/>
</dbReference>
<dbReference type="InterPro" id="IPR011993">
    <property type="entry name" value="PH-like_dom_sf"/>
</dbReference>
<dbReference type="InterPro" id="IPR001849">
    <property type="entry name" value="PH_domain"/>
</dbReference>
<dbReference type="InterPro" id="IPR043448">
    <property type="entry name" value="PKHO1/2"/>
</dbReference>
<dbReference type="PANTHER" id="PTHR15871">
    <property type="entry name" value="PH DOMAIN-CONTAINING PROTEIN"/>
    <property type="match status" value="1"/>
</dbReference>
<dbReference type="PANTHER" id="PTHR15871:SF2">
    <property type="entry name" value="PLECKSTRIN HOMOLOGY DOMAIN-CONTAINING FAMILY O MEMBER 2"/>
    <property type="match status" value="1"/>
</dbReference>
<dbReference type="Pfam" id="PF00169">
    <property type="entry name" value="PH"/>
    <property type="match status" value="1"/>
</dbReference>
<dbReference type="SMART" id="SM00233">
    <property type="entry name" value="PH"/>
    <property type="match status" value="1"/>
</dbReference>
<dbReference type="SUPFAM" id="SSF50729">
    <property type="entry name" value="PH domain-like"/>
    <property type="match status" value="1"/>
</dbReference>
<dbReference type="PROSITE" id="PS50003">
    <property type="entry name" value="PH_DOMAIN"/>
    <property type="match status" value="1"/>
</dbReference>
<reference key="1">
    <citation type="journal article" date="2005" name="Science">
        <title>The transcriptional landscape of the mammalian genome.</title>
        <authorList>
            <person name="Carninci P."/>
            <person name="Kasukawa T."/>
            <person name="Katayama S."/>
            <person name="Gough J."/>
            <person name="Frith M.C."/>
            <person name="Maeda N."/>
            <person name="Oyama R."/>
            <person name="Ravasi T."/>
            <person name="Lenhard B."/>
            <person name="Wells C."/>
            <person name="Kodzius R."/>
            <person name="Shimokawa K."/>
            <person name="Bajic V.B."/>
            <person name="Brenner S.E."/>
            <person name="Batalov S."/>
            <person name="Forrest A.R."/>
            <person name="Zavolan M."/>
            <person name="Davis M.J."/>
            <person name="Wilming L.G."/>
            <person name="Aidinis V."/>
            <person name="Allen J.E."/>
            <person name="Ambesi-Impiombato A."/>
            <person name="Apweiler R."/>
            <person name="Aturaliya R.N."/>
            <person name="Bailey T.L."/>
            <person name="Bansal M."/>
            <person name="Baxter L."/>
            <person name="Beisel K.W."/>
            <person name="Bersano T."/>
            <person name="Bono H."/>
            <person name="Chalk A.M."/>
            <person name="Chiu K.P."/>
            <person name="Choudhary V."/>
            <person name="Christoffels A."/>
            <person name="Clutterbuck D.R."/>
            <person name="Crowe M.L."/>
            <person name="Dalla E."/>
            <person name="Dalrymple B.P."/>
            <person name="de Bono B."/>
            <person name="Della Gatta G."/>
            <person name="di Bernardo D."/>
            <person name="Down T."/>
            <person name="Engstrom P."/>
            <person name="Fagiolini M."/>
            <person name="Faulkner G."/>
            <person name="Fletcher C.F."/>
            <person name="Fukushima T."/>
            <person name="Furuno M."/>
            <person name="Futaki S."/>
            <person name="Gariboldi M."/>
            <person name="Georgii-Hemming P."/>
            <person name="Gingeras T.R."/>
            <person name="Gojobori T."/>
            <person name="Green R.E."/>
            <person name="Gustincich S."/>
            <person name="Harbers M."/>
            <person name="Hayashi Y."/>
            <person name="Hensch T.K."/>
            <person name="Hirokawa N."/>
            <person name="Hill D."/>
            <person name="Huminiecki L."/>
            <person name="Iacono M."/>
            <person name="Ikeo K."/>
            <person name="Iwama A."/>
            <person name="Ishikawa T."/>
            <person name="Jakt M."/>
            <person name="Kanapin A."/>
            <person name="Katoh M."/>
            <person name="Kawasawa Y."/>
            <person name="Kelso J."/>
            <person name="Kitamura H."/>
            <person name="Kitano H."/>
            <person name="Kollias G."/>
            <person name="Krishnan S.P."/>
            <person name="Kruger A."/>
            <person name="Kummerfeld S.K."/>
            <person name="Kurochkin I.V."/>
            <person name="Lareau L.F."/>
            <person name="Lazarevic D."/>
            <person name="Lipovich L."/>
            <person name="Liu J."/>
            <person name="Liuni S."/>
            <person name="McWilliam S."/>
            <person name="Madan Babu M."/>
            <person name="Madera M."/>
            <person name="Marchionni L."/>
            <person name="Matsuda H."/>
            <person name="Matsuzawa S."/>
            <person name="Miki H."/>
            <person name="Mignone F."/>
            <person name="Miyake S."/>
            <person name="Morris K."/>
            <person name="Mottagui-Tabar S."/>
            <person name="Mulder N."/>
            <person name="Nakano N."/>
            <person name="Nakauchi H."/>
            <person name="Ng P."/>
            <person name="Nilsson R."/>
            <person name="Nishiguchi S."/>
            <person name="Nishikawa S."/>
            <person name="Nori F."/>
            <person name="Ohara O."/>
            <person name="Okazaki Y."/>
            <person name="Orlando V."/>
            <person name="Pang K.C."/>
            <person name="Pavan W.J."/>
            <person name="Pavesi G."/>
            <person name="Pesole G."/>
            <person name="Petrovsky N."/>
            <person name="Piazza S."/>
            <person name="Reed J."/>
            <person name="Reid J.F."/>
            <person name="Ring B.Z."/>
            <person name="Ringwald M."/>
            <person name="Rost B."/>
            <person name="Ruan Y."/>
            <person name="Salzberg S.L."/>
            <person name="Sandelin A."/>
            <person name="Schneider C."/>
            <person name="Schoenbach C."/>
            <person name="Sekiguchi K."/>
            <person name="Semple C.A."/>
            <person name="Seno S."/>
            <person name="Sessa L."/>
            <person name="Sheng Y."/>
            <person name="Shibata Y."/>
            <person name="Shimada H."/>
            <person name="Shimada K."/>
            <person name="Silva D."/>
            <person name="Sinclair B."/>
            <person name="Sperling S."/>
            <person name="Stupka E."/>
            <person name="Sugiura K."/>
            <person name="Sultana R."/>
            <person name="Takenaka Y."/>
            <person name="Taki K."/>
            <person name="Tammoja K."/>
            <person name="Tan S.L."/>
            <person name="Tang S."/>
            <person name="Taylor M.S."/>
            <person name="Tegner J."/>
            <person name="Teichmann S.A."/>
            <person name="Ueda H.R."/>
            <person name="van Nimwegen E."/>
            <person name="Verardo R."/>
            <person name="Wei C.L."/>
            <person name="Yagi K."/>
            <person name="Yamanishi H."/>
            <person name="Zabarovsky E."/>
            <person name="Zhu S."/>
            <person name="Zimmer A."/>
            <person name="Hide W."/>
            <person name="Bult C."/>
            <person name="Grimmond S.M."/>
            <person name="Teasdale R.D."/>
            <person name="Liu E.T."/>
            <person name="Brusic V."/>
            <person name="Quackenbush J."/>
            <person name="Wahlestedt C."/>
            <person name="Mattick J.S."/>
            <person name="Hume D.A."/>
            <person name="Kai C."/>
            <person name="Sasaki D."/>
            <person name="Tomaru Y."/>
            <person name="Fukuda S."/>
            <person name="Kanamori-Katayama M."/>
            <person name="Suzuki M."/>
            <person name="Aoki J."/>
            <person name="Arakawa T."/>
            <person name="Iida J."/>
            <person name="Imamura K."/>
            <person name="Itoh M."/>
            <person name="Kato T."/>
            <person name="Kawaji H."/>
            <person name="Kawagashira N."/>
            <person name="Kawashima T."/>
            <person name="Kojima M."/>
            <person name="Kondo S."/>
            <person name="Konno H."/>
            <person name="Nakano K."/>
            <person name="Ninomiya N."/>
            <person name="Nishio T."/>
            <person name="Okada M."/>
            <person name="Plessy C."/>
            <person name="Shibata K."/>
            <person name="Shiraki T."/>
            <person name="Suzuki S."/>
            <person name="Tagami M."/>
            <person name="Waki K."/>
            <person name="Watahiki A."/>
            <person name="Okamura-Oho Y."/>
            <person name="Suzuki H."/>
            <person name="Kawai J."/>
            <person name="Hayashizaki Y."/>
        </authorList>
    </citation>
    <scope>NUCLEOTIDE SEQUENCE [LARGE SCALE MRNA]</scope>
    <source>
        <strain>C57BL/6J</strain>
        <strain>NOD</strain>
        <tissue>Placenta</tissue>
    </source>
</reference>
<reference key="2">
    <citation type="journal article" date="2004" name="Genome Res.">
        <title>The status, quality, and expansion of the NIH full-length cDNA project: the Mammalian Gene Collection (MGC).</title>
        <authorList>
            <consortium name="The MGC Project Team"/>
        </authorList>
    </citation>
    <scope>NUCLEOTIDE SEQUENCE [LARGE SCALE MRNA]</scope>
    <source>
        <tissue>Mammary tumor</tissue>
    </source>
</reference>
<reference key="3">
    <citation type="journal article" date="2007" name="Proc. Natl. Acad. Sci. U.S.A.">
        <title>Large-scale phosphorylation analysis of mouse liver.</title>
        <authorList>
            <person name="Villen J."/>
            <person name="Beausoleil S.A."/>
            <person name="Gerber S.A."/>
            <person name="Gygi S.P."/>
        </authorList>
    </citation>
    <scope>IDENTIFICATION BY MASS SPECTROMETRY [LARGE SCALE ANALYSIS]</scope>
    <source>
        <tissue>Liver</tissue>
    </source>
</reference>
<reference key="4">
    <citation type="journal article" date="2009" name="Immunity">
        <title>The phagosomal proteome in interferon-gamma-activated macrophages.</title>
        <authorList>
            <person name="Trost M."/>
            <person name="English L."/>
            <person name="Lemieux S."/>
            <person name="Courcelles M."/>
            <person name="Desjardins M."/>
            <person name="Thibault P."/>
        </authorList>
    </citation>
    <scope>PHOSPHORYLATION [LARGE SCALE ANALYSIS] AT THR-233; SER-236 AND SER-395</scope>
    <scope>IDENTIFICATION BY MASS SPECTROMETRY [LARGE SCALE ANALYSIS]</scope>
</reference>
<reference key="5">
    <citation type="journal article" date="2009" name="Mol. Cell. Proteomics">
        <title>Large scale localization of protein phosphorylation by use of electron capture dissociation mass spectrometry.</title>
        <authorList>
            <person name="Sweet S.M."/>
            <person name="Bailey C.M."/>
            <person name="Cunningham D.L."/>
            <person name="Heath J.K."/>
            <person name="Cooper H.J."/>
        </authorList>
    </citation>
    <scope>PHOSPHORYLATION [LARGE SCALE ANALYSIS] AT SER-395</scope>
    <scope>IDENTIFICATION BY MASS SPECTROMETRY [LARGE SCALE ANALYSIS]</scope>
    <source>
        <tissue>Embryonic fibroblast</tissue>
    </source>
</reference>
<reference key="6">
    <citation type="journal article" date="2010" name="Cell">
        <title>A tissue-specific atlas of mouse protein phosphorylation and expression.</title>
        <authorList>
            <person name="Huttlin E.L."/>
            <person name="Jedrychowski M.P."/>
            <person name="Elias J.E."/>
            <person name="Goswami T."/>
            <person name="Rad R."/>
            <person name="Beausoleil S.A."/>
            <person name="Villen J."/>
            <person name="Haas W."/>
            <person name="Sowa M.E."/>
            <person name="Gygi S.P."/>
        </authorList>
    </citation>
    <scope>PHOSPHORYLATION [LARGE SCALE ANALYSIS] AT THR-233; SER-238; SER-239; SER-292 AND THR-296</scope>
    <scope>IDENTIFICATION BY MASS SPECTROMETRY [LARGE SCALE ANALYSIS]</scope>
    <source>
        <tissue>Brown adipose tissue</tissue>
        <tissue>Heart</tissue>
        <tissue>Liver</tissue>
        <tissue>Lung</tissue>
        <tissue>Spleen</tissue>
        <tissue>Testis</tissue>
    </source>
</reference>
<keyword id="KW-0175">Coiled coil</keyword>
<keyword id="KW-0597">Phosphoprotein</keyword>
<keyword id="KW-1185">Reference proteome</keyword>
<name>PKHO2_MOUSE</name>
<feature type="chain" id="PRO_0000309484" description="Pleckstrin homology domain-containing family O member 2">
    <location>
        <begin position="1"/>
        <end position="495"/>
    </location>
</feature>
<feature type="domain" description="PH" evidence="3">
    <location>
        <begin position="18"/>
        <end position="120"/>
    </location>
</feature>
<feature type="region of interest" description="Disordered" evidence="4">
    <location>
        <begin position="171"/>
        <end position="411"/>
    </location>
</feature>
<feature type="coiled-coil region" evidence="2">
    <location>
        <begin position="444"/>
        <end position="469"/>
    </location>
</feature>
<feature type="compositionally biased region" description="Pro residues" evidence="4">
    <location>
        <begin position="198"/>
        <end position="213"/>
    </location>
</feature>
<feature type="compositionally biased region" description="Polar residues" evidence="4">
    <location>
        <begin position="235"/>
        <end position="244"/>
    </location>
</feature>
<feature type="compositionally biased region" description="Low complexity" evidence="4">
    <location>
        <begin position="324"/>
        <end position="335"/>
    </location>
</feature>
<feature type="compositionally biased region" description="Polar residues" evidence="4">
    <location>
        <begin position="336"/>
        <end position="350"/>
    </location>
</feature>
<feature type="compositionally biased region" description="Basic and acidic residues" evidence="4">
    <location>
        <begin position="399"/>
        <end position="411"/>
    </location>
</feature>
<feature type="modified residue" description="Phosphoserine" evidence="1">
    <location>
        <position position="165"/>
    </location>
</feature>
<feature type="modified residue" description="Phosphoserine" evidence="1">
    <location>
        <position position="168"/>
    </location>
</feature>
<feature type="modified residue" description="Phosphothreonine" evidence="7 8">
    <location>
        <position position="233"/>
    </location>
</feature>
<feature type="modified residue" description="Phosphoserine" evidence="7">
    <location>
        <position position="236"/>
    </location>
</feature>
<feature type="modified residue" description="Phosphoserine" evidence="8">
    <location>
        <position position="238"/>
    </location>
</feature>
<feature type="modified residue" description="Phosphoserine" evidence="8">
    <location>
        <position position="239"/>
    </location>
</feature>
<feature type="modified residue" description="Phosphoserine" evidence="1">
    <location>
        <position position="274"/>
    </location>
</feature>
<feature type="modified residue" description="Phosphoserine" evidence="8">
    <location>
        <position position="292"/>
    </location>
</feature>
<feature type="modified residue" description="Phosphothreonine" evidence="8">
    <location>
        <position position="296"/>
    </location>
</feature>
<feature type="modified residue" description="Phosphoserine" evidence="6 7">
    <location>
        <position position="395"/>
    </location>
</feature>
<feature type="sequence conflict" description="In Ref. 1; BAE32369." evidence="5" ref="1">
    <original>MEEE</original>
    <variation>VRRWRNWAEQDKTFP</variation>
    <location>
        <begin position="1"/>
        <end position="4"/>
    </location>
</feature>
<feature type="sequence conflict" description="In Ref. 1; BAE41823." evidence="5" ref="1">
    <original>P</original>
    <variation>A</variation>
    <location>
        <position position="183"/>
    </location>
</feature>
<feature type="sequence conflict" description="In Ref. 1; BAE32369." evidence="5" ref="1">
    <original>A</original>
    <variation>P</variation>
    <location>
        <position position="218"/>
    </location>
</feature>
<feature type="sequence conflict" description="In Ref. 2; AAH25598." evidence="5" ref="2">
    <original>GSS</original>
    <variation>TRP</variation>
    <location>
        <begin position="330"/>
        <end position="332"/>
    </location>
</feature>
<feature type="sequence conflict" description="In Ref. 1; BAC25735." evidence="5" ref="1">
    <original>LGDLLRESPQHPRLPKEKLYRAQLEVKVASKQT</original>
    <variation>HAGGVEWGWGLPRLSPCPYDPPFLSFGNKPHFM</variation>
    <location>
        <begin position="396"/>
        <end position="428"/>
    </location>
</feature>
<organism>
    <name type="scientific">Mus musculus</name>
    <name type="common">Mouse</name>
    <dbReference type="NCBI Taxonomy" id="10090"/>
    <lineage>
        <taxon>Eukaryota</taxon>
        <taxon>Metazoa</taxon>
        <taxon>Chordata</taxon>
        <taxon>Craniata</taxon>
        <taxon>Vertebrata</taxon>
        <taxon>Euteleostomi</taxon>
        <taxon>Mammalia</taxon>
        <taxon>Eutheria</taxon>
        <taxon>Euarchontoglires</taxon>
        <taxon>Glires</taxon>
        <taxon>Rodentia</taxon>
        <taxon>Myomorpha</taxon>
        <taxon>Muroidea</taxon>
        <taxon>Muridae</taxon>
        <taxon>Murinae</taxon>
        <taxon>Mus</taxon>
        <taxon>Mus</taxon>
    </lineage>
</organism>
<protein>
    <recommendedName>
        <fullName>Pleckstrin homology domain-containing family O member 2</fullName>
        <shortName>PH domain-containing family O member 2</shortName>
    </recommendedName>
    <alternativeName>
        <fullName>Pleckstrin homology domain-containing family Q member 1</fullName>
        <shortName>PH domain-containing family Q member 1</shortName>
    </alternativeName>
</protein>
<gene>
    <name type="primary">Plekho2</name>
    <name type="synonym">Plekhq1</name>
</gene>
<sequence>MEEESIKEGSEKPRGARTADKAGWIKKSSGGLLGLWKDRYLLLCQAQLLVYENEDEQKCVETVELGSYEKCQDLRTLLKRKHHRFILLRSPGNKVSDIKFQAPSGEEKESWIKALNEGINRGKNKAFDEVKVDKTCALEHVTRNRVRGGQRRRPPTRIHLKEVASAASDGLSRLDLDVPDSGPPVFAPLSDISEDQPQEPPRALMPPVKPSPGPETSAVEDSKETPAGERALTPDSASSGANPESQEDAETPAKEDSDVKSLPNSTLSEKLKVSWENPSPEKPSAPESAQLSSSETPEATPRESKKPPAPPPKILSEKMKACMSGVDASGSSQSSEAPETTSPEPTQVSVNGMDDGPESALQAMGIPGPAPEDAAASPALPFSDLPSQFHPRSSSLGDLLRESPQHPRLPKEKLYRAQLEVKVASKQTEKLLNQVLGSEPPPVCAESLLSQAVEQLRQATQVLQEMRDLGELNQETPGLVQKRKELVTLYRRSAP</sequence>